<organism>
    <name type="scientific">Streptococcus agalactiae serotype Ia (strain ATCC 27591 / A909 / CDC SS700)</name>
    <dbReference type="NCBI Taxonomy" id="205921"/>
    <lineage>
        <taxon>Bacteria</taxon>
        <taxon>Bacillati</taxon>
        <taxon>Bacillota</taxon>
        <taxon>Bacilli</taxon>
        <taxon>Lactobacillales</taxon>
        <taxon>Streptococcaceae</taxon>
        <taxon>Streptococcus</taxon>
    </lineage>
</organism>
<comment type="function">
    <text evidence="1">Catalyzes the transfer of a ribosyl phosphate group from 5-phosphoribose 1-diphosphate to orotate, leading to the formation of orotidine monophosphate (OMP).</text>
</comment>
<comment type="catalytic activity">
    <reaction evidence="1">
        <text>orotidine 5'-phosphate + diphosphate = orotate + 5-phospho-alpha-D-ribose 1-diphosphate</text>
        <dbReference type="Rhea" id="RHEA:10380"/>
        <dbReference type="ChEBI" id="CHEBI:30839"/>
        <dbReference type="ChEBI" id="CHEBI:33019"/>
        <dbReference type="ChEBI" id="CHEBI:57538"/>
        <dbReference type="ChEBI" id="CHEBI:58017"/>
        <dbReference type="EC" id="2.4.2.10"/>
    </reaction>
</comment>
<comment type="cofactor">
    <cofactor evidence="1">
        <name>Mg(2+)</name>
        <dbReference type="ChEBI" id="CHEBI:18420"/>
    </cofactor>
</comment>
<comment type="pathway">
    <text evidence="1">Pyrimidine metabolism; UMP biosynthesis via de novo pathway; UMP from orotate: step 1/2.</text>
</comment>
<comment type="subunit">
    <text evidence="1">Homodimer.</text>
</comment>
<comment type="similarity">
    <text evidence="1">Belongs to the purine/pyrimidine phosphoribosyltransferase family. PyrE subfamily.</text>
</comment>
<sequence length="209" mass="23112">MDLARQIAMELLDIQAVYLRPKQPFTWASGVKSPIYTDNRVTLSYPETRTLIENGFVKQIQEHFPNVDIIAGTATAGIPHGAIIADKMNLPFAYIRSKAKDHGVGNQIEGRVYSGQKMVIIEDLISTGGSVLEAVTAAQSQGIEVLGVVAIFTYQLAKAEQAFREANIPLVTLTDYNQLIKVAKVNGYITADQLVLLKKFKEDQMNWQS</sequence>
<gene>
    <name evidence="1" type="primary">pyrE</name>
    <name type="ordered locus">SAK_1136</name>
</gene>
<reference key="1">
    <citation type="journal article" date="2005" name="Proc. Natl. Acad. Sci. U.S.A.">
        <title>Genome analysis of multiple pathogenic isolates of Streptococcus agalactiae: implications for the microbial 'pan-genome'.</title>
        <authorList>
            <person name="Tettelin H."/>
            <person name="Masignani V."/>
            <person name="Cieslewicz M.J."/>
            <person name="Donati C."/>
            <person name="Medini D."/>
            <person name="Ward N.L."/>
            <person name="Angiuoli S.V."/>
            <person name="Crabtree J."/>
            <person name="Jones A.L."/>
            <person name="Durkin A.S."/>
            <person name="DeBoy R.T."/>
            <person name="Davidsen T.M."/>
            <person name="Mora M."/>
            <person name="Scarselli M."/>
            <person name="Margarit y Ros I."/>
            <person name="Peterson J.D."/>
            <person name="Hauser C.R."/>
            <person name="Sundaram J.P."/>
            <person name="Nelson W.C."/>
            <person name="Madupu R."/>
            <person name="Brinkac L.M."/>
            <person name="Dodson R.J."/>
            <person name="Rosovitz M.J."/>
            <person name="Sullivan S.A."/>
            <person name="Daugherty S.C."/>
            <person name="Haft D.H."/>
            <person name="Selengut J."/>
            <person name="Gwinn M.L."/>
            <person name="Zhou L."/>
            <person name="Zafar N."/>
            <person name="Khouri H."/>
            <person name="Radune D."/>
            <person name="Dimitrov G."/>
            <person name="Watkins K."/>
            <person name="O'Connor K.J."/>
            <person name="Smith S."/>
            <person name="Utterback T.R."/>
            <person name="White O."/>
            <person name="Rubens C.E."/>
            <person name="Grandi G."/>
            <person name="Madoff L.C."/>
            <person name="Kasper D.L."/>
            <person name="Telford J.L."/>
            <person name="Wessels M.R."/>
            <person name="Rappuoli R."/>
            <person name="Fraser C.M."/>
        </authorList>
    </citation>
    <scope>NUCLEOTIDE SEQUENCE [LARGE SCALE GENOMIC DNA]</scope>
    <source>
        <strain>ATCC 27591 / A909 / CDC SS700</strain>
    </source>
</reference>
<protein>
    <recommendedName>
        <fullName evidence="1">Orotate phosphoribosyltransferase</fullName>
        <shortName evidence="1">OPRT</shortName>
        <shortName evidence="1">OPRTase</shortName>
        <ecNumber evidence="1">2.4.2.10</ecNumber>
    </recommendedName>
</protein>
<name>PYRE_STRA1</name>
<accession>Q3K146</accession>
<keyword id="KW-0328">Glycosyltransferase</keyword>
<keyword id="KW-0460">Magnesium</keyword>
<keyword id="KW-0665">Pyrimidine biosynthesis</keyword>
<keyword id="KW-0808">Transferase</keyword>
<proteinExistence type="inferred from homology"/>
<dbReference type="EC" id="2.4.2.10" evidence="1"/>
<dbReference type="EMBL" id="CP000114">
    <property type="protein sequence ID" value="ABA44928.1"/>
    <property type="molecule type" value="Genomic_DNA"/>
</dbReference>
<dbReference type="RefSeq" id="WP_000362326.1">
    <property type="nucleotide sequence ID" value="NC_007432.1"/>
</dbReference>
<dbReference type="SMR" id="Q3K146"/>
<dbReference type="KEGG" id="sak:SAK_1136"/>
<dbReference type="HOGENOM" id="CLU_074878_1_1_9"/>
<dbReference type="UniPathway" id="UPA00070">
    <property type="reaction ID" value="UER00119"/>
</dbReference>
<dbReference type="GO" id="GO:0000287">
    <property type="term" value="F:magnesium ion binding"/>
    <property type="evidence" value="ECO:0007669"/>
    <property type="project" value="UniProtKB-UniRule"/>
</dbReference>
<dbReference type="GO" id="GO:0004588">
    <property type="term" value="F:orotate phosphoribosyltransferase activity"/>
    <property type="evidence" value="ECO:0007669"/>
    <property type="project" value="UniProtKB-UniRule"/>
</dbReference>
<dbReference type="GO" id="GO:0044205">
    <property type="term" value="P:'de novo' UMP biosynthetic process"/>
    <property type="evidence" value="ECO:0007669"/>
    <property type="project" value="UniProtKB-UniRule"/>
</dbReference>
<dbReference type="GO" id="GO:0019856">
    <property type="term" value="P:pyrimidine nucleobase biosynthetic process"/>
    <property type="evidence" value="ECO:0007669"/>
    <property type="project" value="TreeGrafter"/>
</dbReference>
<dbReference type="CDD" id="cd06223">
    <property type="entry name" value="PRTases_typeI"/>
    <property type="match status" value="1"/>
</dbReference>
<dbReference type="Gene3D" id="3.40.50.2020">
    <property type="match status" value="1"/>
</dbReference>
<dbReference type="HAMAP" id="MF_01208">
    <property type="entry name" value="PyrE"/>
    <property type="match status" value="1"/>
</dbReference>
<dbReference type="InterPro" id="IPR023031">
    <property type="entry name" value="OPRT"/>
</dbReference>
<dbReference type="InterPro" id="IPR004467">
    <property type="entry name" value="Or_phspho_trans_dom"/>
</dbReference>
<dbReference type="InterPro" id="IPR000836">
    <property type="entry name" value="PRibTrfase_dom"/>
</dbReference>
<dbReference type="InterPro" id="IPR029057">
    <property type="entry name" value="PRTase-like"/>
</dbReference>
<dbReference type="NCBIfam" id="TIGR00336">
    <property type="entry name" value="pyrE"/>
    <property type="match status" value="1"/>
</dbReference>
<dbReference type="PANTHER" id="PTHR19278">
    <property type="entry name" value="OROTATE PHOSPHORIBOSYLTRANSFERASE"/>
    <property type="match status" value="1"/>
</dbReference>
<dbReference type="PANTHER" id="PTHR19278:SF9">
    <property type="entry name" value="URIDINE 5'-MONOPHOSPHATE SYNTHASE"/>
    <property type="match status" value="1"/>
</dbReference>
<dbReference type="Pfam" id="PF00156">
    <property type="entry name" value="Pribosyltran"/>
    <property type="match status" value="1"/>
</dbReference>
<dbReference type="SUPFAM" id="SSF53271">
    <property type="entry name" value="PRTase-like"/>
    <property type="match status" value="1"/>
</dbReference>
<dbReference type="PROSITE" id="PS00103">
    <property type="entry name" value="PUR_PYR_PR_TRANSFER"/>
    <property type="match status" value="1"/>
</dbReference>
<evidence type="ECO:0000255" key="1">
    <source>
        <dbReference type="HAMAP-Rule" id="MF_01208"/>
    </source>
</evidence>
<feature type="chain" id="PRO_1000066305" description="Orotate phosphoribosyltransferase">
    <location>
        <begin position="1"/>
        <end position="209"/>
    </location>
</feature>
<feature type="binding site" evidence="1">
    <location>
        <position position="96"/>
    </location>
    <ligand>
        <name>5-phospho-alpha-D-ribose 1-diphosphate</name>
        <dbReference type="ChEBI" id="CHEBI:58017"/>
        <note>ligand shared between dimeric partners</note>
    </ligand>
</feature>
<feature type="binding site" evidence="1">
    <location>
        <position position="100"/>
    </location>
    <ligand>
        <name>5-phospho-alpha-D-ribose 1-diphosphate</name>
        <dbReference type="ChEBI" id="CHEBI:58017"/>
        <note>ligand shared between dimeric partners</note>
    </ligand>
</feature>
<feature type="binding site" evidence="1">
    <location>
        <position position="102"/>
    </location>
    <ligand>
        <name>5-phospho-alpha-D-ribose 1-diphosphate</name>
        <dbReference type="ChEBI" id="CHEBI:58017"/>
        <note>ligand shared between dimeric partners</note>
    </ligand>
</feature>
<feature type="binding site" description="in other chain" evidence="1">
    <location>
        <begin position="122"/>
        <end position="130"/>
    </location>
    <ligand>
        <name>5-phospho-alpha-D-ribose 1-diphosphate</name>
        <dbReference type="ChEBI" id="CHEBI:58017"/>
        <note>ligand shared between dimeric partners</note>
    </ligand>
</feature>
<feature type="binding site" evidence="1">
    <location>
        <position position="126"/>
    </location>
    <ligand>
        <name>orotate</name>
        <dbReference type="ChEBI" id="CHEBI:30839"/>
    </ligand>
</feature>